<dbReference type="EC" id="3.1.1.72" evidence="6"/>
<dbReference type="EC" id="3.1.1.117" evidence="7"/>
<dbReference type="EMBL" id="AJ238716">
    <property type="protein sequence ID" value="CAB55348.1"/>
    <property type="molecule type" value="Genomic_DNA"/>
</dbReference>
<dbReference type="PDB" id="8TSE">
    <property type="method" value="X-ray"/>
    <property type="resolution" value="1.25 A"/>
    <property type="chains" value="A=366-768"/>
</dbReference>
<dbReference type="PDBsum" id="8TSE"/>
<dbReference type="SMR" id="Q9RLB8"/>
<dbReference type="STRING" id="1265.SAMN02910280_2771"/>
<dbReference type="ESTHER" id="rumfl-CESA">
    <property type="family name" value="Glucuronoyl_esterase"/>
</dbReference>
<dbReference type="BRENDA" id="3.1.1.117">
    <property type="organism ID" value="5478"/>
</dbReference>
<dbReference type="UniPathway" id="UPA00114"/>
<dbReference type="GO" id="GO:0005576">
    <property type="term" value="C:extracellular region"/>
    <property type="evidence" value="ECO:0007669"/>
    <property type="project" value="UniProtKB-SubCell"/>
</dbReference>
<dbReference type="GO" id="GO:0046555">
    <property type="term" value="F:acetylxylan esterase activity"/>
    <property type="evidence" value="ECO:0007669"/>
    <property type="project" value="UniProtKB-EC"/>
</dbReference>
<dbReference type="GO" id="GO:0004553">
    <property type="term" value="F:hydrolase activity, hydrolyzing O-glycosyl compounds"/>
    <property type="evidence" value="ECO:0007669"/>
    <property type="project" value="InterPro"/>
</dbReference>
<dbReference type="GO" id="GO:0004622">
    <property type="term" value="F:lysophospholipase activity"/>
    <property type="evidence" value="ECO:0007669"/>
    <property type="project" value="TreeGrafter"/>
</dbReference>
<dbReference type="GO" id="GO:0045493">
    <property type="term" value="P:xylan catabolic process"/>
    <property type="evidence" value="ECO:0007669"/>
    <property type="project" value="UniProtKB-UniPathway"/>
</dbReference>
<dbReference type="CDD" id="cd14256">
    <property type="entry name" value="Dockerin_I"/>
    <property type="match status" value="1"/>
</dbReference>
<dbReference type="CDD" id="cd01833">
    <property type="entry name" value="XynB_like"/>
    <property type="match status" value="1"/>
</dbReference>
<dbReference type="Gene3D" id="3.40.50.1820">
    <property type="entry name" value="alpha/beta hydrolase"/>
    <property type="match status" value="1"/>
</dbReference>
<dbReference type="Gene3D" id="1.10.1330.10">
    <property type="entry name" value="Dockerin domain"/>
    <property type="match status" value="1"/>
</dbReference>
<dbReference type="Gene3D" id="3.40.50.1110">
    <property type="entry name" value="SGNH hydrolase"/>
    <property type="match status" value="1"/>
</dbReference>
<dbReference type="InterPro" id="IPR029058">
    <property type="entry name" value="AB_hydrolase_fold"/>
</dbReference>
<dbReference type="InterPro" id="IPR002105">
    <property type="entry name" value="Dockerin_1_rpt"/>
</dbReference>
<dbReference type="InterPro" id="IPR016134">
    <property type="entry name" value="Dockerin_dom"/>
</dbReference>
<dbReference type="InterPro" id="IPR036439">
    <property type="entry name" value="Dockerin_dom_sf"/>
</dbReference>
<dbReference type="InterPro" id="IPR051532">
    <property type="entry name" value="Ester_Hydrolysis_Enzymes"/>
</dbReference>
<dbReference type="InterPro" id="IPR054579">
    <property type="entry name" value="GCE-like_dom"/>
</dbReference>
<dbReference type="InterPro" id="IPR001087">
    <property type="entry name" value="GDSL"/>
</dbReference>
<dbReference type="InterPro" id="IPR036514">
    <property type="entry name" value="SGNH_hydro_sf"/>
</dbReference>
<dbReference type="PANTHER" id="PTHR30383:SF5">
    <property type="entry name" value="SGNH HYDROLASE-TYPE ESTERASE DOMAIN-CONTAINING PROTEIN"/>
    <property type="match status" value="1"/>
</dbReference>
<dbReference type="PANTHER" id="PTHR30383">
    <property type="entry name" value="THIOESTERASE 1/PROTEASE 1/LYSOPHOSPHOLIPASE L1"/>
    <property type="match status" value="1"/>
</dbReference>
<dbReference type="Pfam" id="PF00404">
    <property type="entry name" value="Dockerin_1"/>
    <property type="match status" value="1"/>
</dbReference>
<dbReference type="Pfam" id="PF22244">
    <property type="entry name" value="GCE_fung"/>
    <property type="match status" value="1"/>
</dbReference>
<dbReference type="Pfam" id="PF00657">
    <property type="entry name" value="Lipase_GDSL"/>
    <property type="match status" value="1"/>
</dbReference>
<dbReference type="SUPFAM" id="SSF52266">
    <property type="entry name" value="SGNH hydrolase"/>
    <property type="match status" value="1"/>
</dbReference>
<dbReference type="SUPFAM" id="SSF63446">
    <property type="entry name" value="Type I dockerin domain"/>
    <property type="match status" value="1"/>
</dbReference>
<dbReference type="PROSITE" id="PS51766">
    <property type="entry name" value="DOCKERIN"/>
    <property type="match status" value="1"/>
</dbReference>
<accession>Q9RLB8</accession>
<keyword id="KW-0002">3D-structure</keyword>
<keyword id="KW-0119">Carbohydrate metabolism</keyword>
<keyword id="KW-0378">Hydrolase</keyword>
<keyword id="KW-0511">Multifunctional enzyme</keyword>
<keyword id="KW-0624">Polysaccharide degradation</keyword>
<keyword id="KW-0964">Secreted</keyword>
<keyword id="KW-0719">Serine esterase</keyword>
<keyword id="KW-0732">Signal</keyword>
<keyword id="KW-0858">Xylan degradation</keyword>
<sequence>MKKHFVVGETIKRFLRIGTSLALSISTLSLLPSAPRLSSAAGTIKIMPLGDSITYGMADEGGYRKYLSYFLQQKGYTNVDLVGPEGKDSASFNYNGQSVKYDDNHAGYSGYTITNLPGGWFGQLNGILETMQGGDYIKKYSPDIILLQIGTNDVSNGHLDGSEERLHKLLDYLRENMPSNGKVFLTTIPDLGNSGWGGNSNGDIAKYNELIKKVANDYSSKNVIYADIHSVIDASKDLADGVHPNAGGYEKMGKYWLEQIEGYLKASDGPQQTQPTQPSQGDSGPELIYGDLDGDKTITSFDAVIMRKGLINDFKDNNVKKAADIDQNGKAEVADLVQLQSFIIGKIKEFTVAEKTVTEKPVFEKSYNFPAVNQLKSSKDIPDPFIFMDGSKVESTDDWWKRQSEISCMYEYYMYGKWIDGSDDETTYSISGNSMTINVKRKSTGKTASFKAVINLPKNVRHEGGAPVILGMHKGISESTATSNGYAVITYDSDGMFSAPGTAQDNNQHKGAFYDLYPYGRNWDEQTGDLMAWSWGISRILDALYNGAAKELNINPDSSIVTGVSRYGKAASVCGAFDTRIKMCAPSCSGAGGLALYRYSSVGKTYDFSSKGGSSSYTYKENEPLGSLQASGEQGWFNGRFMEFRNAEQFPMDQHMLGALCCDPDRYLFIIGSCESEDWVNAPSVWMAYLGMKHVWDYVGISDHLAINIHKSGHAVIAEDIEKMVQYFDYHVYGIQPKMNLEELQTSVFALPKNKDSFADTFASKWLY</sequence>
<evidence type="ECO:0000250" key="1">
    <source>
        <dbReference type="UniProtKB" id="G2QJR6"/>
    </source>
</evidence>
<evidence type="ECO:0000250" key="2">
    <source>
        <dbReference type="UniProtKB" id="Q00017"/>
    </source>
</evidence>
<evidence type="ECO:0000255" key="3"/>
<evidence type="ECO:0000255" key="4">
    <source>
        <dbReference type="PROSITE-ProRule" id="PRU01102"/>
    </source>
</evidence>
<evidence type="ECO:0000256" key="5">
    <source>
        <dbReference type="SAM" id="MobiDB-lite"/>
    </source>
</evidence>
<evidence type="ECO:0000269" key="6">
    <source>
    </source>
</evidence>
<evidence type="ECO:0000269" key="7">
    <source>
    </source>
</evidence>
<evidence type="ECO:0000303" key="8">
    <source>
    </source>
</evidence>
<evidence type="ECO:0000303" key="9">
    <source>
    </source>
</evidence>
<evidence type="ECO:0000305" key="10"/>
<evidence type="ECO:0000305" key="11">
    <source>
    </source>
</evidence>
<evidence type="ECO:0000305" key="12">
    <source>
    </source>
</evidence>
<evidence type="ECO:0007829" key="13">
    <source>
        <dbReference type="PDB" id="8TSE"/>
    </source>
</evidence>
<comment type="function">
    <text evidence="6 7">Esterase involved in the degradation of plant cell wall polysaccharides. Catalyzes the deacetylation of chemically acetylated xylan and native, steam-extracted xylan (PubMed:10846217). Seems to act in synergy with the xylanase XynD which produces xylo-oligosaccharides (PubMed:10846217). Also catalyzes the deesterification of methyl esters of 4-O-methyl-D-glucuronic acid (MeGlcA) side residues in synthetic glucuronoxylan methyl ester, suggesting that it may be able to cleave ester linkages between MeGlcA carboxyl and more complex alcohols, including linkages between hemicellulose and lignin alcohols in plant cell walls (PubMed:26216754).</text>
</comment>
<comment type="catalytic activity">
    <reaction evidence="6">
        <text>Deacetylation of xylans and xylo-oligosaccharides.</text>
        <dbReference type="EC" id="3.1.1.72"/>
    </reaction>
</comment>
<comment type="catalytic activity">
    <reaction evidence="7">
        <text>a 4-O-methyl-alpha-D-glucuronosyl ester derivative + H2O = 4-O-methyl-alpha-D-glucuronate derivative + an alcohol + H(+)</text>
        <dbReference type="Rhea" id="RHEA:67452"/>
        <dbReference type="ChEBI" id="CHEBI:15377"/>
        <dbReference type="ChEBI" id="CHEBI:15378"/>
        <dbReference type="ChEBI" id="CHEBI:30879"/>
        <dbReference type="ChEBI" id="CHEBI:171667"/>
        <dbReference type="ChEBI" id="CHEBI:171668"/>
        <dbReference type="EC" id="3.1.1.117"/>
    </reaction>
    <physiologicalReaction direction="left-to-right" evidence="12">
        <dbReference type="Rhea" id="RHEA:67453"/>
    </physiologicalReaction>
</comment>
<comment type="pathway">
    <text evidence="11">Glycan degradation; xylan degradation.</text>
</comment>
<comment type="subcellular location">
    <subcellularLocation>
        <location evidence="10">Secreted</location>
    </subcellularLocation>
</comment>
<comment type="domain">
    <text evidence="11">Contains a dockerin-like region in addition to its catalytic domains, suggesting that this enzyme forms part of a cellulosome-like multienzyme complex.</text>
</comment>
<comment type="similarity">
    <text evidence="10">In the N-terminal section; belongs to the carbohydrate esterase 3 (CE3) family.</text>
</comment>
<comment type="similarity">
    <text evidence="10">In the C-terminal section; belongs to the carbohydrate esterase 15 (CE15) family.</text>
</comment>
<protein>
    <recommendedName>
        <fullName evidence="8">Multidomain esterase</fullName>
    </recommendedName>
    <domain>
        <recommendedName>
            <fullName evidence="8">Acetylxylan esterase</fullName>
            <ecNumber evidence="6">3.1.1.72</ecNumber>
        </recommendedName>
    </domain>
    <domain>
        <recommendedName>
            <fullName evidence="12">4-O-methyl-glucuronoyl methylesterase</fullName>
            <ecNumber evidence="7">3.1.1.117</ecNumber>
        </recommendedName>
        <alternativeName>
            <fullName evidence="9">Glucuronoyl esterase</fullName>
            <shortName evidence="9">GE</shortName>
        </alternativeName>
    </domain>
</protein>
<organism>
    <name type="scientific">Ruminococcus flavefaciens</name>
    <dbReference type="NCBI Taxonomy" id="1265"/>
    <lineage>
        <taxon>Bacteria</taxon>
        <taxon>Bacillati</taxon>
        <taxon>Bacillota</taxon>
        <taxon>Clostridia</taxon>
        <taxon>Eubacteriales</taxon>
        <taxon>Oscillospiraceae</taxon>
        <taxon>Ruminococcus</taxon>
    </lineage>
</organism>
<feature type="signal peptide" evidence="3">
    <location>
        <begin position="1"/>
        <end position="40"/>
    </location>
</feature>
<feature type="chain" id="PRO_5004331521" description="Multidomain esterase">
    <location>
        <begin position="41"/>
        <end position="768"/>
    </location>
</feature>
<feature type="domain" description="Dockerin" evidence="4">
    <location>
        <begin position="285"/>
        <end position="352"/>
    </location>
</feature>
<feature type="region of interest" description="Acetylxylan esterase" evidence="10">
    <location>
        <begin position="41"/>
        <end position="264"/>
    </location>
</feature>
<feature type="region of interest" description="Disordered" evidence="5">
    <location>
        <begin position="267"/>
        <end position="289"/>
    </location>
</feature>
<feature type="region of interest" description="Glucuronoyl esterase" evidence="12">
    <location>
        <begin position="353"/>
        <end position="768"/>
    </location>
</feature>
<feature type="short sequence motif" description="GXSYXG catalytic site motif" evidence="1">
    <location>
        <begin position="563"/>
        <end position="568"/>
    </location>
</feature>
<feature type="compositionally biased region" description="Low complexity" evidence="5">
    <location>
        <begin position="267"/>
        <end position="283"/>
    </location>
</feature>
<feature type="active site" description="Nucleophile; for acetylxylan esterase activity" evidence="2">
    <location>
        <position position="68"/>
    </location>
</feature>
<feature type="active site" description="For acetylxylan esterase activity" evidence="2">
    <location>
        <position position="240"/>
    </location>
</feature>
<feature type="active site" description="For acetylxylan esterase activity" evidence="2">
    <location>
        <position position="243"/>
    </location>
</feature>
<feature type="active site" description="Nucleophile; for glucuronoyl esterase activity" evidence="1">
    <location>
        <position position="565"/>
    </location>
</feature>
<feature type="binding site" evidence="1">
    <location>
        <position position="569"/>
    </location>
    <ligand>
        <name>substrate</name>
    </ligand>
</feature>
<feature type="binding site" evidence="1">
    <location>
        <position position="633"/>
    </location>
    <ligand>
        <name>substrate</name>
    </ligand>
</feature>
<feature type="binding site" evidence="1">
    <location>
        <position position="679"/>
    </location>
    <ligand>
        <name>substrate</name>
    </ligand>
</feature>
<feature type="helix" evidence="13">
    <location>
        <begin position="372"/>
        <end position="374"/>
    </location>
</feature>
<feature type="helix" evidence="13">
    <location>
        <begin position="396"/>
        <end position="413"/>
    </location>
</feature>
<feature type="strand" evidence="13">
    <location>
        <begin position="424"/>
        <end position="431"/>
    </location>
</feature>
<feature type="strand" evidence="13">
    <location>
        <begin position="434"/>
        <end position="441"/>
    </location>
</feature>
<feature type="turn" evidence="13">
    <location>
        <begin position="442"/>
        <end position="444"/>
    </location>
</feature>
<feature type="strand" evidence="13">
    <location>
        <begin position="447"/>
        <end position="455"/>
    </location>
</feature>
<feature type="strand" evidence="13">
    <location>
        <begin position="465"/>
        <end position="474"/>
    </location>
</feature>
<feature type="helix" evidence="13">
    <location>
        <begin position="478"/>
        <end position="483"/>
    </location>
</feature>
<feature type="strand" evidence="13">
    <location>
        <begin position="487"/>
        <end position="492"/>
    </location>
</feature>
<feature type="strand" evidence="13">
    <location>
        <begin position="495"/>
        <end position="498"/>
    </location>
</feature>
<feature type="helix" evidence="13">
    <location>
        <begin position="512"/>
        <end position="516"/>
    </location>
</feature>
<feature type="helix" evidence="13">
    <location>
        <begin position="523"/>
        <end position="525"/>
    </location>
</feature>
<feature type="helix" evidence="13">
    <location>
        <begin position="529"/>
        <end position="545"/>
    </location>
</feature>
<feature type="helix" evidence="13">
    <location>
        <begin position="548"/>
        <end position="552"/>
    </location>
</feature>
<feature type="strand" evidence="13">
    <location>
        <begin position="554"/>
        <end position="564"/>
    </location>
</feature>
<feature type="helix" evidence="13">
    <location>
        <begin position="566"/>
        <end position="577"/>
    </location>
</feature>
<feature type="strand" evidence="13">
    <location>
        <begin position="582"/>
        <end position="588"/>
    </location>
</feature>
<feature type="turn" evidence="13">
    <location>
        <begin position="591"/>
        <end position="594"/>
    </location>
</feature>
<feature type="helix" evidence="13">
    <location>
        <begin position="609"/>
        <end position="611"/>
    </location>
</feature>
<feature type="strand" evidence="13">
    <location>
        <begin position="615"/>
        <end position="618"/>
    </location>
</feature>
<feature type="helix" evidence="13">
    <location>
        <begin position="625"/>
        <end position="628"/>
    </location>
</feature>
<feature type="turn" evidence="13">
    <location>
        <begin position="631"/>
        <end position="633"/>
    </location>
</feature>
<feature type="helix" evidence="13">
    <location>
        <begin position="634"/>
        <end position="636"/>
    </location>
</feature>
<feature type="helix" evidence="13">
    <location>
        <begin position="640"/>
        <end position="643"/>
    </location>
</feature>
<feature type="helix" evidence="13">
    <location>
        <begin position="647"/>
        <end position="649"/>
    </location>
</feature>
<feature type="helix" evidence="13">
    <location>
        <begin position="654"/>
        <end position="659"/>
    </location>
</feature>
<feature type="strand" evidence="13">
    <location>
        <begin position="667"/>
        <end position="676"/>
    </location>
</feature>
<feature type="helix" evidence="13">
    <location>
        <begin position="678"/>
        <end position="680"/>
    </location>
</feature>
<feature type="helix" evidence="13">
    <location>
        <begin position="682"/>
        <end position="699"/>
    </location>
</feature>
<feature type="helix" evidence="13">
    <location>
        <begin position="702"/>
        <end position="704"/>
    </location>
</feature>
<feature type="strand" evidence="13">
    <location>
        <begin position="705"/>
        <end position="712"/>
    </location>
</feature>
<feature type="helix" evidence="13">
    <location>
        <begin position="718"/>
        <end position="733"/>
    </location>
</feature>
<feature type="helix" evidence="13">
    <location>
        <begin position="741"/>
        <end position="745"/>
    </location>
</feature>
<feature type="helix" evidence="13">
    <location>
        <begin position="748"/>
        <end position="750"/>
    </location>
</feature>
<feature type="helix" evidence="13">
    <location>
        <begin position="752"/>
        <end position="754"/>
    </location>
</feature>
<feature type="helix" evidence="13">
    <location>
        <begin position="758"/>
        <end position="761"/>
    </location>
</feature>
<feature type="turn" evidence="13">
    <location>
        <begin position="762"/>
        <end position="765"/>
    </location>
</feature>
<gene>
    <name evidence="8" type="primary">cesA</name>
</gene>
<proteinExistence type="evidence at protein level"/>
<name>CESA_RUMFL</name>
<reference key="1">
    <citation type="journal article" date="2000" name="Microbiology">
        <title>Three multidomain esterases from the cellulolytic rumen anaerobe Ruminococcus flavefaciens 17 that carry divergent dockerin sequences.</title>
        <authorList>
            <person name="Aurilia V."/>
            <person name="Martin J.C."/>
            <person name="McCrae S.I."/>
            <person name="Scott K.P."/>
            <person name="Rincon M.T."/>
            <person name="Flint H.J."/>
        </authorList>
    </citation>
    <scope>NUCLEOTIDE SEQUENCE [GENOMIC DNA]</scope>
    <scope>FUNCTION OF THE N-TERMINAL DOMAIN AS AN ACETYLXYLAN ESTERASE</scope>
    <scope>CATALYTIC ACTIVITY</scope>
    <scope>PATHWAY</scope>
    <scope>DOMAIN</scope>
    <source>
        <strain>17</strain>
    </source>
</reference>
<reference key="2">
    <citation type="journal article" date="2015" name="FEBS Lett.">
        <title>Glucuronoyl esterases are active on the polymeric substrate methyl esterified glucuronoxylan.</title>
        <authorList>
            <person name="Biely P."/>
            <person name="Malovikova A."/>
            <person name="Uhliarikova I."/>
            <person name="Li X.L."/>
            <person name="Wong D.W."/>
        </authorList>
    </citation>
    <scope>FUNCTION OF THE C-TERMINAL DOMAIN AS A GLUCURONOYL ESTERASE</scope>
    <source>
        <strain>17</strain>
    </source>
</reference>